<keyword id="KW-0963">Cytoplasm</keyword>
<keyword id="KW-0690">Ribosome biogenesis</keyword>
<name>RBFA_COXB2</name>
<protein>
    <recommendedName>
        <fullName evidence="1">Ribosome-binding factor A</fullName>
    </recommendedName>
</protein>
<sequence length="119" mass="13769">MSQRQQRVADLIHQQLAELLKKEVRDSRLSKISLTAVSISPDLKQAKVFYSLLENQNEKEVQKALNKATGYLRHLLAQATVLRYVPKLEFVYDESIERAHRISFLIERALKKDDSDESS</sequence>
<dbReference type="EMBL" id="CP001019">
    <property type="protein sequence ID" value="ACJ17990.1"/>
    <property type="molecule type" value="Genomic_DNA"/>
</dbReference>
<dbReference type="RefSeq" id="WP_012569827.1">
    <property type="nucleotide sequence ID" value="NC_011527.1"/>
</dbReference>
<dbReference type="SMR" id="B6IZ62"/>
<dbReference type="KEGG" id="cbg:CbuG_0578"/>
<dbReference type="HOGENOM" id="CLU_089475_5_1_6"/>
<dbReference type="GO" id="GO:0005829">
    <property type="term" value="C:cytosol"/>
    <property type="evidence" value="ECO:0007669"/>
    <property type="project" value="TreeGrafter"/>
</dbReference>
<dbReference type="GO" id="GO:0043024">
    <property type="term" value="F:ribosomal small subunit binding"/>
    <property type="evidence" value="ECO:0007669"/>
    <property type="project" value="TreeGrafter"/>
</dbReference>
<dbReference type="GO" id="GO:0030490">
    <property type="term" value="P:maturation of SSU-rRNA"/>
    <property type="evidence" value="ECO:0007669"/>
    <property type="project" value="UniProtKB-UniRule"/>
</dbReference>
<dbReference type="Gene3D" id="3.30.300.20">
    <property type="match status" value="1"/>
</dbReference>
<dbReference type="HAMAP" id="MF_00003">
    <property type="entry name" value="RbfA"/>
    <property type="match status" value="1"/>
</dbReference>
<dbReference type="InterPro" id="IPR015946">
    <property type="entry name" value="KH_dom-like_a/b"/>
</dbReference>
<dbReference type="InterPro" id="IPR000238">
    <property type="entry name" value="RbfA"/>
</dbReference>
<dbReference type="InterPro" id="IPR023799">
    <property type="entry name" value="RbfA_dom_sf"/>
</dbReference>
<dbReference type="InterPro" id="IPR020053">
    <property type="entry name" value="Ribosome-bd_factorA_CS"/>
</dbReference>
<dbReference type="NCBIfam" id="NF010390">
    <property type="entry name" value="PRK13817.1"/>
    <property type="match status" value="1"/>
</dbReference>
<dbReference type="NCBIfam" id="TIGR00082">
    <property type="entry name" value="rbfA"/>
    <property type="match status" value="1"/>
</dbReference>
<dbReference type="PANTHER" id="PTHR33515">
    <property type="entry name" value="RIBOSOME-BINDING FACTOR A, CHLOROPLASTIC-RELATED"/>
    <property type="match status" value="1"/>
</dbReference>
<dbReference type="PANTHER" id="PTHR33515:SF1">
    <property type="entry name" value="RIBOSOME-BINDING FACTOR A, CHLOROPLASTIC-RELATED"/>
    <property type="match status" value="1"/>
</dbReference>
<dbReference type="Pfam" id="PF02033">
    <property type="entry name" value="RBFA"/>
    <property type="match status" value="1"/>
</dbReference>
<dbReference type="SUPFAM" id="SSF89919">
    <property type="entry name" value="Ribosome-binding factor A, RbfA"/>
    <property type="match status" value="1"/>
</dbReference>
<dbReference type="PROSITE" id="PS01319">
    <property type="entry name" value="RBFA"/>
    <property type="match status" value="1"/>
</dbReference>
<accession>B6IZ62</accession>
<organism>
    <name type="scientific">Coxiella burnetii (strain CbuG_Q212)</name>
    <name type="common">Coxiella burnetii (strain Q212)</name>
    <dbReference type="NCBI Taxonomy" id="434923"/>
    <lineage>
        <taxon>Bacteria</taxon>
        <taxon>Pseudomonadati</taxon>
        <taxon>Pseudomonadota</taxon>
        <taxon>Gammaproteobacteria</taxon>
        <taxon>Legionellales</taxon>
        <taxon>Coxiellaceae</taxon>
        <taxon>Coxiella</taxon>
    </lineage>
</organism>
<reference key="1">
    <citation type="journal article" date="2009" name="Infect. Immun.">
        <title>Comparative genomics reveal extensive transposon-mediated genomic plasticity and diversity among potential effector proteins within the genus Coxiella.</title>
        <authorList>
            <person name="Beare P.A."/>
            <person name="Unsworth N."/>
            <person name="Andoh M."/>
            <person name="Voth D.E."/>
            <person name="Omsland A."/>
            <person name="Gilk S.D."/>
            <person name="Williams K.P."/>
            <person name="Sobral B.W."/>
            <person name="Kupko J.J. III"/>
            <person name="Porcella S.F."/>
            <person name="Samuel J.E."/>
            <person name="Heinzen R.A."/>
        </authorList>
    </citation>
    <scope>NUCLEOTIDE SEQUENCE [LARGE SCALE GENOMIC DNA]</scope>
    <source>
        <strain>CbuG_Q212</strain>
    </source>
</reference>
<comment type="function">
    <text evidence="1">One of several proteins that assist in the late maturation steps of the functional core of the 30S ribosomal subunit. Associates with free 30S ribosomal subunits (but not with 30S subunits that are part of 70S ribosomes or polysomes). Required for efficient processing of 16S rRNA. May interact with the 5'-terminal helix region of 16S rRNA.</text>
</comment>
<comment type="subunit">
    <text evidence="1">Monomer. Binds 30S ribosomal subunits, but not 50S ribosomal subunits or 70S ribosomes.</text>
</comment>
<comment type="subcellular location">
    <subcellularLocation>
        <location evidence="1">Cytoplasm</location>
    </subcellularLocation>
</comment>
<comment type="similarity">
    <text evidence="1">Belongs to the RbfA family.</text>
</comment>
<feature type="chain" id="PRO_1000088880" description="Ribosome-binding factor A">
    <location>
        <begin position="1"/>
        <end position="119"/>
    </location>
</feature>
<proteinExistence type="inferred from homology"/>
<gene>
    <name evidence="1" type="primary">rbfA</name>
    <name type="ordered locus">CbuG_0578</name>
</gene>
<evidence type="ECO:0000255" key="1">
    <source>
        <dbReference type="HAMAP-Rule" id="MF_00003"/>
    </source>
</evidence>